<comment type="function">
    <text evidence="1 2">Acts as a transcriptional regulator. Probably redox-responsive. The apo- but not holo-form probably binds DNA (By similarity). Plays a role in lipooligosaccharide (LOS) biosynthesis by regulating LOS gene expression.</text>
</comment>
<comment type="cofactor">
    <cofactor evidence="1">
        <name>[4Fe-4S] cluster</name>
        <dbReference type="ChEBI" id="CHEBI:49883"/>
    </cofactor>
    <text evidence="1">Binds 1 [4Fe-4S] cluster per subunit. Following nitrosylation of the [4Fe-4S] cluster binds 1 [4Fe-8(NO)] cluster per subunit.</text>
</comment>
<comment type="subcellular location">
    <subcellularLocation>
        <location evidence="1">Cytoplasm</location>
    </subcellularLocation>
</comment>
<comment type="PTM">
    <text evidence="1">The Fe-S cluster can be nitrosylated by nitric oxide (NO).</text>
</comment>
<comment type="PTM">
    <text evidence="1">Upon Fe-S cluster removal intramolecular disulfide bonds are formed.</text>
</comment>
<comment type="disruption phenotype">
    <text evidence="2">Has a rough-dry colony morphology. About 50% lipooligosaccharide (LOS) biosynthesis, with LOS-III and LOS-IV being most affected. Decreased expression of a number of genes involved in LOS synthesis, such as mmar_2326, mmar_2327, mmar_2354 and papA3 (mmar_2355).</text>
</comment>
<comment type="similarity">
    <text evidence="3">Belongs to the WhiB family.</text>
</comment>
<proteinExistence type="inferred from homology"/>
<protein>
    <recommendedName>
        <fullName>Transcriptional regulator WhiB4</fullName>
    </recommendedName>
</protein>
<evidence type="ECO:0000250" key="1"/>
<evidence type="ECO:0000269" key="2">
    <source>
    </source>
</evidence>
<evidence type="ECO:0000305" key="3"/>
<reference key="1">
    <citation type="journal article" date="2008" name="Genome Res.">
        <title>Insights from the complete genome sequence of Mycobacterium marinum on the evolution of Mycobacterium tuberculosis.</title>
        <authorList>
            <person name="Stinear T.P."/>
            <person name="Seemann T."/>
            <person name="Harrison P.F."/>
            <person name="Jenkin G.A."/>
            <person name="Davies J.K."/>
            <person name="Johnson P.D."/>
            <person name="Abdellah Z."/>
            <person name="Arrowsmith C."/>
            <person name="Chillingworth T."/>
            <person name="Churcher C."/>
            <person name="Clarke K."/>
            <person name="Cronin A."/>
            <person name="Davis P."/>
            <person name="Goodhead I."/>
            <person name="Holroyd N."/>
            <person name="Jagels K."/>
            <person name="Lord A."/>
            <person name="Moule S."/>
            <person name="Mungall K."/>
            <person name="Norbertczak H."/>
            <person name="Quail M.A."/>
            <person name="Rabbinowitsch E."/>
            <person name="Walker D."/>
            <person name="White B."/>
            <person name="Whitehead S."/>
            <person name="Small P.L."/>
            <person name="Brosch R."/>
            <person name="Ramakrishnan L."/>
            <person name="Fischbach M.A."/>
            <person name="Parkhill J."/>
            <person name="Cole S.T."/>
        </authorList>
    </citation>
    <scope>NUCLEOTIDE SEQUENCE [LARGE SCALE GENOMIC DNA]</scope>
    <source>
        <strain>ATCC BAA-535 / M</strain>
    </source>
</reference>
<reference key="2">
    <citation type="journal article" date="2012" name="J. Biol. Chem.">
        <title>Unexpected link between lipooligosaccharide biosynthesis and surface protein release in Mycobacterium marinum.</title>
        <authorList>
            <person name="van der Woude A.D."/>
            <person name="Sarkar D."/>
            <person name="Bhatt A."/>
            <person name="Sparrius M."/>
            <person name="Raadsen S.A."/>
            <person name="Boon L."/>
            <person name="Geurtsen J."/>
            <person name="van der Sar A.M."/>
            <person name="Luirink J."/>
            <person name="Houben E.N."/>
            <person name="Besra G.S."/>
            <person name="Bitter W."/>
        </authorList>
    </citation>
    <scope>FUNCTION</scope>
    <scope>DISRUPTION PHENOTYPE</scope>
    <source>
        <strain>E11</strain>
    </source>
</reference>
<sequence length="116" mass="13016">MSGIRPVDGRANLTSAQNLLSTGEAEERINWVSKALCRATDPDELFVRGAAQRKAAVICRHCPVMQECGADALDNKVEFGVWGGMTERQRRALLKQHPEVVSWSDYFEKRKRRSVG</sequence>
<feature type="chain" id="PRO_0000420392" description="Transcriptional regulator WhiB4">
    <location>
        <begin position="1"/>
        <end position="116"/>
    </location>
</feature>
<feature type="domain" description="4Fe-4S Wbl-type">
    <location>
        <begin position="36"/>
        <end position="92"/>
    </location>
</feature>
<feature type="binding site" evidence="1">
    <location>
        <position position="37"/>
    </location>
    <ligand>
        <name>[4Fe-4S] cluster</name>
        <dbReference type="ChEBI" id="CHEBI:49883"/>
    </ligand>
</feature>
<feature type="binding site" evidence="1">
    <location>
        <position position="59"/>
    </location>
    <ligand>
        <name>[4Fe-4S] cluster</name>
        <dbReference type="ChEBI" id="CHEBI:49883"/>
    </ligand>
</feature>
<feature type="binding site" evidence="1">
    <location>
        <position position="62"/>
    </location>
    <ligand>
        <name>[4Fe-4S] cluster</name>
        <dbReference type="ChEBI" id="CHEBI:49883"/>
    </ligand>
</feature>
<feature type="binding site" evidence="1">
    <location>
        <position position="68"/>
    </location>
    <ligand>
        <name>[4Fe-4S] cluster</name>
        <dbReference type="ChEBI" id="CHEBI:49883"/>
    </ligand>
</feature>
<accession>B2HK79</accession>
<gene>
    <name type="primary">whiB4</name>
    <name type="ordered locus">MMAR_5170</name>
</gene>
<dbReference type="EMBL" id="CP000854">
    <property type="protein sequence ID" value="ACC43576.1"/>
    <property type="molecule type" value="Genomic_DNA"/>
</dbReference>
<dbReference type="RefSeq" id="WP_012396686.1">
    <property type="nucleotide sequence ID" value="NC_010612.1"/>
</dbReference>
<dbReference type="SMR" id="B2HK79"/>
<dbReference type="STRING" id="216594.MMAR_5170"/>
<dbReference type="GeneID" id="34339857"/>
<dbReference type="KEGG" id="mmi:MMAR_5170"/>
<dbReference type="eggNOG" id="ENOG5032TCV">
    <property type="taxonomic scope" value="Bacteria"/>
</dbReference>
<dbReference type="HOGENOM" id="CLU_106245_2_2_11"/>
<dbReference type="OrthoDB" id="4228525at2"/>
<dbReference type="PHI-base" id="PHI:7189"/>
<dbReference type="Proteomes" id="UP000001190">
    <property type="component" value="Chromosome"/>
</dbReference>
<dbReference type="GO" id="GO:0005737">
    <property type="term" value="C:cytoplasm"/>
    <property type="evidence" value="ECO:0007669"/>
    <property type="project" value="UniProtKB-SubCell"/>
</dbReference>
<dbReference type="GO" id="GO:0051539">
    <property type="term" value="F:4 iron, 4 sulfur cluster binding"/>
    <property type="evidence" value="ECO:0007669"/>
    <property type="project" value="UniProtKB-UniRule"/>
</dbReference>
<dbReference type="GO" id="GO:0035731">
    <property type="term" value="F:dinitrosyl-iron complex binding"/>
    <property type="evidence" value="ECO:0007669"/>
    <property type="project" value="UniProtKB-UniRule"/>
</dbReference>
<dbReference type="GO" id="GO:0003677">
    <property type="term" value="F:DNA binding"/>
    <property type="evidence" value="ECO:0007669"/>
    <property type="project" value="UniProtKB-UniRule"/>
</dbReference>
<dbReference type="GO" id="GO:0046872">
    <property type="term" value="F:metal ion binding"/>
    <property type="evidence" value="ECO:0007669"/>
    <property type="project" value="UniProtKB-KW"/>
</dbReference>
<dbReference type="GO" id="GO:0047134">
    <property type="term" value="F:protein-disulfide reductase [NAD(P)H] activity"/>
    <property type="evidence" value="ECO:0007669"/>
    <property type="project" value="TreeGrafter"/>
</dbReference>
<dbReference type="GO" id="GO:0045454">
    <property type="term" value="P:cell redox homeostasis"/>
    <property type="evidence" value="ECO:0007669"/>
    <property type="project" value="TreeGrafter"/>
</dbReference>
<dbReference type="GO" id="GO:0045892">
    <property type="term" value="P:negative regulation of DNA-templated transcription"/>
    <property type="evidence" value="ECO:0007669"/>
    <property type="project" value="TreeGrafter"/>
</dbReference>
<dbReference type="HAMAP" id="MF_01479">
    <property type="entry name" value="WhiB"/>
    <property type="match status" value="1"/>
</dbReference>
<dbReference type="InterPro" id="IPR034768">
    <property type="entry name" value="4FE4S_WBL"/>
</dbReference>
<dbReference type="InterPro" id="IPR003482">
    <property type="entry name" value="Whib"/>
</dbReference>
<dbReference type="PANTHER" id="PTHR38839:SF7">
    <property type="entry name" value="TRANSCRIPTIONAL REGULATOR WHIB4"/>
    <property type="match status" value="1"/>
</dbReference>
<dbReference type="PANTHER" id="PTHR38839">
    <property type="entry name" value="TRANSCRIPTIONAL REGULATOR WHID-RELATED"/>
    <property type="match status" value="1"/>
</dbReference>
<dbReference type="Pfam" id="PF02467">
    <property type="entry name" value="Whib"/>
    <property type="match status" value="1"/>
</dbReference>
<dbReference type="PROSITE" id="PS51674">
    <property type="entry name" value="4FE4S_WBL"/>
    <property type="match status" value="1"/>
</dbReference>
<organism>
    <name type="scientific">Mycobacterium marinum (strain ATCC BAA-535 / M)</name>
    <dbReference type="NCBI Taxonomy" id="216594"/>
    <lineage>
        <taxon>Bacteria</taxon>
        <taxon>Bacillati</taxon>
        <taxon>Actinomycetota</taxon>
        <taxon>Actinomycetes</taxon>
        <taxon>Mycobacteriales</taxon>
        <taxon>Mycobacteriaceae</taxon>
        <taxon>Mycobacterium</taxon>
        <taxon>Mycobacterium ulcerans group</taxon>
    </lineage>
</organism>
<name>WHIB4_MYCMM</name>
<keyword id="KW-0004">4Fe-4S</keyword>
<keyword id="KW-0963">Cytoplasm</keyword>
<keyword id="KW-1015">Disulfide bond</keyword>
<keyword id="KW-0238">DNA-binding</keyword>
<keyword id="KW-0408">Iron</keyword>
<keyword id="KW-0411">Iron-sulfur</keyword>
<keyword id="KW-0479">Metal-binding</keyword>
<keyword id="KW-1185">Reference proteome</keyword>
<keyword id="KW-0804">Transcription</keyword>
<keyword id="KW-0805">Transcription regulation</keyword>